<dbReference type="EMBL" id="U63927">
    <property type="protein sequence ID" value="AAB64308.1"/>
    <property type="molecule type" value="Genomic_DNA"/>
</dbReference>
<dbReference type="SMR" id="Q39697"/>
<dbReference type="GO" id="GO:0005737">
    <property type="term" value="C:cytoplasm"/>
    <property type="evidence" value="ECO:0007669"/>
    <property type="project" value="UniProtKB-KW"/>
</dbReference>
<dbReference type="GO" id="GO:0005874">
    <property type="term" value="C:microtubule"/>
    <property type="evidence" value="ECO:0007669"/>
    <property type="project" value="UniProtKB-KW"/>
</dbReference>
<dbReference type="GO" id="GO:0005525">
    <property type="term" value="F:GTP binding"/>
    <property type="evidence" value="ECO:0007669"/>
    <property type="project" value="UniProtKB-KW"/>
</dbReference>
<dbReference type="GO" id="GO:0003924">
    <property type="term" value="F:GTPase activity"/>
    <property type="evidence" value="ECO:0007669"/>
    <property type="project" value="InterPro"/>
</dbReference>
<dbReference type="GO" id="GO:0046872">
    <property type="term" value="F:metal ion binding"/>
    <property type="evidence" value="ECO:0007669"/>
    <property type="project" value="UniProtKB-KW"/>
</dbReference>
<dbReference type="GO" id="GO:0005200">
    <property type="term" value="F:structural constituent of cytoskeleton"/>
    <property type="evidence" value="ECO:0007669"/>
    <property type="project" value="InterPro"/>
</dbReference>
<dbReference type="GO" id="GO:0007017">
    <property type="term" value="P:microtubule-based process"/>
    <property type="evidence" value="ECO:0007669"/>
    <property type="project" value="InterPro"/>
</dbReference>
<dbReference type="CDD" id="cd02187">
    <property type="entry name" value="beta_tubulin"/>
    <property type="match status" value="1"/>
</dbReference>
<dbReference type="FunFam" id="1.10.287.600:FF:000002">
    <property type="entry name" value="Tubulin beta chain"/>
    <property type="match status" value="1"/>
</dbReference>
<dbReference type="FunFam" id="3.30.1330.20:FF:000002">
    <property type="entry name" value="Tubulin beta chain"/>
    <property type="match status" value="1"/>
</dbReference>
<dbReference type="FunFam" id="3.40.50.1440:FF:000005">
    <property type="entry name" value="Tubulin beta chain"/>
    <property type="match status" value="1"/>
</dbReference>
<dbReference type="Gene3D" id="1.10.287.600">
    <property type="entry name" value="Helix hairpin bin"/>
    <property type="match status" value="1"/>
</dbReference>
<dbReference type="Gene3D" id="3.30.1330.20">
    <property type="entry name" value="Tubulin/FtsZ, C-terminal domain"/>
    <property type="match status" value="1"/>
</dbReference>
<dbReference type="Gene3D" id="3.40.50.1440">
    <property type="entry name" value="Tubulin/FtsZ, GTPase domain"/>
    <property type="match status" value="1"/>
</dbReference>
<dbReference type="InterPro" id="IPR013838">
    <property type="entry name" value="Beta-tubulin_BS"/>
</dbReference>
<dbReference type="InterPro" id="IPR002453">
    <property type="entry name" value="Beta_tubulin"/>
</dbReference>
<dbReference type="InterPro" id="IPR008280">
    <property type="entry name" value="Tub_FtsZ_C"/>
</dbReference>
<dbReference type="InterPro" id="IPR000217">
    <property type="entry name" value="Tubulin"/>
</dbReference>
<dbReference type="InterPro" id="IPR037103">
    <property type="entry name" value="Tubulin/FtsZ-like_C"/>
</dbReference>
<dbReference type="InterPro" id="IPR018316">
    <property type="entry name" value="Tubulin/FtsZ_2-layer-sand-dom"/>
</dbReference>
<dbReference type="InterPro" id="IPR036525">
    <property type="entry name" value="Tubulin/FtsZ_GTPase_sf"/>
</dbReference>
<dbReference type="InterPro" id="IPR023123">
    <property type="entry name" value="Tubulin_C"/>
</dbReference>
<dbReference type="InterPro" id="IPR017975">
    <property type="entry name" value="Tubulin_CS"/>
</dbReference>
<dbReference type="InterPro" id="IPR003008">
    <property type="entry name" value="Tubulin_FtsZ_GTPase"/>
</dbReference>
<dbReference type="PANTHER" id="PTHR11588">
    <property type="entry name" value="TUBULIN"/>
    <property type="match status" value="1"/>
</dbReference>
<dbReference type="Pfam" id="PF00091">
    <property type="entry name" value="Tubulin"/>
    <property type="match status" value="1"/>
</dbReference>
<dbReference type="Pfam" id="PF03953">
    <property type="entry name" value="Tubulin_C"/>
    <property type="match status" value="1"/>
</dbReference>
<dbReference type="PRINTS" id="PR01163">
    <property type="entry name" value="BETATUBULIN"/>
</dbReference>
<dbReference type="PRINTS" id="PR01161">
    <property type="entry name" value="TUBULIN"/>
</dbReference>
<dbReference type="SMART" id="SM00864">
    <property type="entry name" value="Tubulin"/>
    <property type="match status" value="1"/>
</dbReference>
<dbReference type="SMART" id="SM00865">
    <property type="entry name" value="Tubulin_C"/>
    <property type="match status" value="1"/>
</dbReference>
<dbReference type="SUPFAM" id="SSF55307">
    <property type="entry name" value="Tubulin C-terminal domain-like"/>
    <property type="match status" value="1"/>
</dbReference>
<dbReference type="SUPFAM" id="SSF52490">
    <property type="entry name" value="Tubulin nucleotide-binding domain-like"/>
    <property type="match status" value="1"/>
</dbReference>
<dbReference type="PROSITE" id="PS00227">
    <property type="entry name" value="TUBULIN"/>
    <property type="match status" value="1"/>
</dbReference>
<dbReference type="PROSITE" id="PS00228">
    <property type="entry name" value="TUBULIN_B_AUTOREG"/>
    <property type="match status" value="1"/>
</dbReference>
<keyword id="KW-0963">Cytoplasm</keyword>
<keyword id="KW-0206">Cytoskeleton</keyword>
<keyword id="KW-0342">GTP-binding</keyword>
<keyword id="KW-0460">Magnesium</keyword>
<keyword id="KW-0479">Metal-binding</keyword>
<keyword id="KW-0493">Microtubule</keyword>
<keyword id="KW-0547">Nucleotide-binding</keyword>
<reference key="1">
    <citation type="journal article" date="1997" name="Cell Struct. Funct.">
        <title>Characterization of the carrot beta-tubulin gene coding a divergent isotype, beta-2.</title>
        <authorList>
            <person name="Okamura S."/>
            <person name="Naito K."/>
            <person name="Sonehara S."/>
            <person name="Ohkawa H."/>
            <person name="Kuramori S."/>
            <person name="Tatsuta M."/>
            <person name="Minamizono M."/>
            <person name="Kataoka T."/>
        </authorList>
    </citation>
    <scope>NUCLEOTIDE SEQUENCE [GENOMIC DNA]</scope>
    <source>
        <strain>cv. Kintoki</strain>
    </source>
</reference>
<evidence type="ECO:0000250" key="1">
    <source>
        <dbReference type="UniProtKB" id="P68363"/>
    </source>
</evidence>
<evidence type="ECO:0000250" key="2">
    <source>
        <dbReference type="UniProtKB" id="Q13509"/>
    </source>
</evidence>
<evidence type="ECO:0000256" key="3">
    <source>
        <dbReference type="SAM" id="MobiDB-lite"/>
    </source>
</evidence>
<evidence type="ECO:0000305" key="4"/>
<organism>
    <name type="scientific">Daucus carota</name>
    <name type="common">Wild carrot</name>
    <dbReference type="NCBI Taxonomy" id="4039"/>
    <lineage>
        <taxon>Eukaryota</taxon>
        <taxon>Viridiplantae</taxon>
        <taxon>Streptophyta</taxon>
        <taxon>Embryophyta</taxon>
        <taxon>Tracheophyta</taxon>
        <taxon>Spermatophyta</taxon>
        <taxon>Magnoliopsida</taxon>
        <taxon>eudicotyledons</taxon>
        <taxon>Gunneridae</taxon>
        <taxon>Pentapetalae</taxon>
        <taxon>asterids</taxon>
        <taxon>campanulids</taxon>
        <taxon>Apiales</taxon>
        <taxon>Apiaceae</taxon>
        <taxon>Apioideae</taxon>
        <taxon>Scandiceae</taxon>
        <taxon>Daucinae</taxon>
        <taxon>Daucus</taxon>
        <taxon>Daucus sect. Daucus</taxon>
    </lineage>
</organism>
<comment type="function">
    <text>Tubulin is the major constituent of microtubules, a cylinder consisting of laterally associated linear protofilaments composed of alpha- and beta-tubulin heterodimers. Microtubules grow by the addition of GTP-tubulin dimers to the microtubule end, where a stabilizing cap forms. Below the cap, tubulin dimers are in GDP-bound state, owing to GTPase activity of alpha-tubulin.</text>
</comment>
<comment type="cofactor">
    <cofactor evidence="1">
        <name>Mg(2+)</name>
        <dbReference type="ChEBI" id="CHEBI:18420"/>
    </cofactor>
</comment>
<comment type="subunit">
    <text>Dimer of alpha and beta chains. A typical microtubule is a hollow water-filled tube with an outer diameter of 25 nm and an inner diameter of 15 nM. Alpha-beta heterodimers associate head-to-tail to form protofilaments running lengthwise along the microtubule wall with the beta-tubulin subunit facing the microtubule plus end conferring a structural polarity. Microtubules usually have 13 protofilaments but different protofilament numbers can be found in some organisms and specialized cells.</text>
</comment>
<comment type="subcellular location">
    <subcellularLocation>
        <location>Cytoplasm</location>
        <location>Cytoskeleton</location>
    </subcellularLocation>
</comment>
<comment type="tissue specificity">
    <text>Found in areas of rapidly dividing tissues.</text>
</comment>
<comment type="similarity">
    <text evidence="4">Belongs to the tubulin family.</text>
</comment>
<accession>Q39697</accession>
<proteinExistence type="evidence at transcript level"/>
<protein>
    <recommendedName>
        <fullName>Tubulin beta-2 chain</fullName>
    </recommendedName>
    <alternativeName>
        <fullName>Beta-2-tubulin</fullName>
    </alternativeName>
</protein>
<name>TBB2_DAUCA</name>
<sequence>MREILHIQGGQCGNQIGSKFWEVVCDEHGIDPTGQVLSESDLQLDRINVYYNEASGGRYVPRAVLMDLEPGTMDSVKTGPHGQIFRPDNFIFGQSGAGNNWAKGHYTEGAELIDSVLDVVRKEAENCECLQGFQVCHSLGGGTGSGMGTLLISKIREEYPDRMMLTFSVFPSPKVSDTVVEPYNATLSGHQLVENADECMVLDNEALYDICFRTLKLSTPSFGDLNHLISGTMSGVTCCLRFPGQLNSDLRKLAVNLIPFPRLHFFMVGFAPLTSRGSQQYRTLTVPELTQQMWDSKNMMCAADPRHGRYLTASAMFRGKMSTKEVDEQILNVQNKNSSYFVEWIPNNVKSSVCDIPPRGLSMSSTFIGNSTSIQEMFRRVSEQFTAMFRPKAFLHWYTGEGMDEMEFTEAESNMNDLVSEYQQYQDATAEEDDYDDGEGSTGD</sequence>
<feature type="chain" id="PRO_0000048339" description="Tubulin beta-2 chain">
    <location>
        <begin position="1"/>
        <end position="444"/>
    </location>
</feature>
<feature type="region of interest" description="Disordered" evidence="3">
    <location>
        <begin position="422"/>
        <end position="444"/>
    </location>
</feature>
<feature type="compositionally biased region" description="Acidic residues" evidence="3">
    <location>
        <begin position="429"/>
        <end position="444"/>
    </location>
</feature>
<feature type="binding site" evidence="2">
    <location>
        <position position="11"/>
    </location>
    <ligand>
        <name>GTP</name>
        <dbReference type="ChEBI" id="CHEBI:37565"/>
    </ligand>
</feature>
<feature type="binding site" evidence="1">
    <location>
        <position position="69"/>
    </location>
    <ligand>
        <name>GTP</name>
        <dbReference type="ChEBI" id="CHEBI:37565"/>
    </ligand>
</feature>
<feature type="binding site" evidence="1">
    <location>
        <position position="69"/>
    </location>
    <ligand>
        <name>Mg(2+)</name>
        <dbReference type="ChEBI" id="CHEBI:18420"/>
    </ligand>
</feature>
<feature type="binding site" evidence="2">
    <location>
        <position position="138"/>
    </location>
    <ligand>
        <name>GTP</name>
        <dbReference type="ChEBI" id="CHEBI:37565"/>
    </ligand>
</feature>
<feature type="binding site" evidence="2">
    <location>
        <position position="142"/>
    </location>
    <ligand>
        <name>GTP</name>
        <dbReference type="ChEBI" id="CHEBI:37565"/>
    </ligand>
</feature>
<feature type="binding site" evidence="2">
    <location>
        <position position="143"/>
    </location>
    <ligand>
        <name>GTP</name>
        <dbReference type="ChEBI" id="CHEBI:37565"/>
    </ligand>
</feature>
<feature type="binding site" evidence="2">
    <location>
        <position position="144"/>
    </location>
    <ligand>
        <name>GTP</name>
        <dbReference type="ChEBI" id="CHEBI:37565"/>
    </ligand>
</feature>
<feature type="binding site" evidence="2">
    <location>
        <position position="204"/>
    </location>
    <ligand>
        <name>GTP</name>
        <dbReference type="ChEBI" id="CHEBI:37565"/>
    </ligand>
</feature>
<feature type="binding site" evidence="2">
    <location>
        <position position="226"/>
    </location>
    <ligand>
        <name>GTP</name>
        <dbReference type="ChEBI" id="CHEBI:37565"/>
    </ligand>
</feature>
<gene>
    <name type="primary">TUBB2</name>
</gene>